<proteinExistence type="evidence at protein level"/>
<comment type="function">
    <molecule>Isoform A</molecule>
    <text evidence="4 5">Binds to membranes enriched in phosphatidylserine or phosphatidylglycerol in a calcium-dependent manner (PubMed:27676605, PubMed:30610115). Half-maximal membrane binding requires about 60 uM calcium. Does not bind to membranes that lack phospholipids with an acidic headgroup (PubMed:27676605).</text>
</comment>
<comment type="function">
    <molecule>Isoform B</molecule>
    <text evidence="4">Binds to membranes enriched in phosphatidylserine or phosphatidylglycerol in a calcium-dependent manner, but requires higher calcium levels for membrane binding than isoform A. Half-maximal membrane binding requires about 320 uM calcium.</text>
</comment>
<comment type="subunit">
    <molecule>Isoform A</molecule>
    <text evidence="5">Monomer and homodimer.</text>
</comment>
<comment type="subcellular location">
    <subcellularLocation>
        <location evidence="3">Apical cell membrane</location>
    </subcellularLocation>
    <subcellularLocation>
        <location evidence="5">Cell membrane</location>
        <topology evidence="5">Lipid-anchor</topology>
    </subcellularLocation>
    <subcellularLocation>
        <location evidence="1">Cytoplasmic vesicle</location>
    </subcellularLocation>
    <text evidence="3 5">Myristoylation anchors the protein to the membrane, but the protein also displays calcium-dependent, reversible binding to lipid membranes (PubMed:30610115). Associated with the plasma membrane of undifferentiated, proliferating crypt epithelial cells as well as differentiated villus enterocytes (PubMed:1530946).</text>
</comment>
<comment type="alternative products">
    <event type="alternative splicing"/>
    <isoform>
        <id>P27216-1</id>
        <name>A</name>
        <name>Anx13A</name>
        <name evidence="8">A13a</name>
        <sequence type="displayed"/>
    </isoform>
    <isoform>
        <id>P27216-2</id>
        <name>B</name>
        <name>Anx13B</name>
        <name evidence="8">A13b</name>
        <sequence type="described" ref="VSP_000291"/>
    </isoform>
</comment>
<comment type="tissue specificity">
    <text evidence="3">Detected in epithelial cells in colon and jejunum (at protein level). Detected in epithelial cells in jejunum.</text>
</comment>
<comment type="domain">
    <text>A pair of annexin repeats may form one binding site for calcium and phospholipid.</text>
</comment>
<comment type="similarity">
    <text evidence="2 9">Belongs to the annexin family.</text>
</comment>
<reference key="1">
    <citation type="journal article" date="1992" name="J. Cell Biol.">
        <title>A strategy for isolation of cDNAs encoding proteins affecting human intestinal epithelial cell growth and differentiation: characterization of a novel gut-specific N-myristoylated annexin.</title>
        <authorList>
            <person name="Wice B.M."/>
            <person name="Gordon J.I."/>
        </authorList>
    </citation>
    <scope>NUCLEOTIDE SEQUENCE [MRNA] (ISOFORM A)</scope>
    <scope>SUBCELLULAR LOCATION</scope>
    <scope>MYRISTOYLATION AT GLY-2</scope>
    <scope>TISSUE SPECIFICITY</scope>
</reference>
<reference key="2">
    <citation type="journal article" date="2002" name="Mol. Biol. Evol.">
        <title>Comparative genetics and evolution of annexin A13 as the founder gene of vertebrate annexins.</title>
        <authorList>
            <person name="Iglesias J.M."/>
            <person name="Morgan R.O."/>
            <person name="Jenkins N.A."/>
            <person name="Copeland N.G."/>
            <person name="Gilbert D.J."/>
            <person name="Fernandez M.-P."/>
        </authorList>
    </citation>
    <scope>NUCLEOTIDE SEQUENCE [MRNA] (ISOFORM B)</scope>
    <source>
        <tissue>Colon adenocarcinoma</tissue>
    </source>
</reference>
<reference key="3">
    <citation type="journal article" date="2006" name="Nature">
        <title>DNA sequence and analysis of human chromosome 8.</title>
        <authorList>
            <person name="Nusbaum C."/>
            <person name="Mikkelsen T.S."/>
            <person name="Zody M.C."/>
            <person name="Asakawa S."/>
            <person name="Taudien S."/>
            <person name="Garber M."/>
            <person name="Kodira C.D."/>
            <person name="Schueler M.G."/>
            <person name="Shimizu A."/>
            <person name="Whittaker C.A."/>
            <person name="Chang J.L."/>
            <person name="Cuomo C.A."/>
            <person name="Dewar K."/>
            <person name="FitzGerald M.G."/>
            <person name="Yang X."/>
            <person name="Allen N.R."/>
            <person name="Anderson S."/>
            <person name="Asakawa T."/>
            <person name="Blechschmidt K."/>
            <person name="Bloom T."/>
            <person name="Borowsky M.L."/>
            <person name="Butler J."/>
            <person name="Cook A."/>
            <person name="Corum B."/>
            <person name="DeArellano K."/>
            <person name="DeCaprio D."/>
            <person name="Dooley K.T."/>
            <person name="Dorris L. III"/>
            <person name="Engels R."/>
            <person name="Gloeckner G."/>
            <person name="Hafez N."/>
            <person name="Hagopian D.S."/>
            <person name="Hall J.L."/>
            <person name="Ishikawa S.K."/>
            <person name="Jaffe D.B."/>
            <person name="Kamat A."/>
            <person name="Kudoh J."/>
            <person name="Lehmann R."/>
            <person name="Lokitsang T."/>
            <person name="Macdonald P."/>
            <person name="Major J.E."/>
            <person name="Matthews C.D."/>
            <person name="Mauceli E."/>
            <person name="Menzel U."/>
            <person name="Mihalev A.H."/>
            <person name="Minoshima S."/>
            <person name="Murayama Y."/>
            <person name="Naylor J.W."/>
            <person name="Nicol R."/>
            <person name="Nguyen C."/>
            <person name="O'Leary S.B."/>
            <person name="O'Neill K."/>
            <person name="Parker S.C.J."/>
            <person name="Polley A."/>
            <person name="Raymond C.K."/>
            <person name="Reichwald K."/>
            <person name="Rodriguez J."/>
            <person name="Sasaki T."/>
            <person name="Schilhabel M."/>
            <person name="Siddiqui R."/>
            <person name="Smith C.L."/>
            <person name="Sneddon T.P."/>
            <person name="Talamas J.A."/>
            <person name="Tenzin P."/>
            <person name="Topham K."/>
            <person name="Venkataraman V."/>
            <person name="Wen G."/>
            <person name="Yamazaki S."/>
            <person name="Young S.K."/>
            <person name="Zeng Q."/>
            <person name="Zimmer A.R."/>
            <person name="Rosenthal A."/>
            <person name="Birren B.W."/>
            <person name="Platzer M."/>
            <person name="Shimizu N."/>
            <person name="Lander E.S."/>
        </authorList>
    </citation>
    <scope>NUCLEOTIDE SEQUENCE [LARGE SCALE GENOMIC DNA]</scope>
</reference>
<reference key="4">
    <citation type="journal article" date="2014" name="J. Proteomics">
        <title>An enzyme assisted RP-RPLC approach for in-depth analysis of human liver phosphoproteome.</title>
        <authorList>
            <person name="Bian Y."/>
            <person name="Song C."/>
            <person name="Cheng K."/>
            <person name="Dong M."/>
            <person name="Wang F."/>
            <person name="Huang J."/>
            <person name="Sun D."/>
            <person name="Wang L."/>
            <person name="Ye M."/>
            <person name="Zou H."/>
        </authorList>
    </citation>
    <scope>IDENTIFICATION BY MASS SPECTROMETRY [LARGE SCALE ANALYSIS]</scope>
    <source>
        <tissue>Liver</tissue>
    </source>
</reference>
<reference key="5">
    <citation type="journal article" date="2017" name="Biol. Chem.">
        <title>Structural and lipid-binding characterization of human annexin A13a reveals strong differences with its long A13b isoform.</title>
        <authorList>
            <person name="Fernandez-Lizarbe S."/>
            <person name="Lecona E."/>
            <person name="Santiago-Gomez A."/>
            <person name="Olmo N."/>
            <person name="Lizarbe M.A."/>
            <person name="Turnay J."/>
        </authorList>
    </citation>
    <scope>FUNCTION (ISOFORMS A AND B)</scope>
</reference>
<reference key="6">
    <citation type="journal article" date="2019" name="J. Biol. Chem.">
        <title>An alternative N-terminal fold of the intestine-specific annexin A13a induces dimerization and regulates membrane-binding.</title>
        <authorList>
            <person name="McCulloch K.M."/>
            <person name="Yamakawa I."/>
            <person name="Shifrin D.A. Jr."/>
            <person name="McConnell R.E."/>
            <person name="Foegeding N.J."/>
            <person name="Singh P.K."/>
            <person name="Mao S."/>
            <person name="Tyska M.J."/>
            <person name="Iverson T.M."/>
        </authorList>
    </citation>
    <scope>X-RAY CRYSTALLOGRAPHY (2.60 ANGSTROMS)</scope>
    <scope>FUNCTION (ISOFORM A)</scope>
    <scope>SUBUNIT (ISOFORM A)</scope>
    <scope>SUBCELLULAR LOCATION</scope>
    <scope>MUTAGENESIS OF GLY-2; 32-THR--GLU-34 AND SER-73</scope>
</reference>
<feature type="initiator methionine" description="Removed" evidence="3">
    <location>
        <position position="1"/>
    </location>
</feature>
<feature type="chain" id="PRO_0000067514" description="Annexin A13">
    <location>
        <begin position="2"/>
        <end position="316"/>
    </location>
</feature>
<feature type="repeat" description="Annexin 1" evidence="2">
    <location>
        <begin position="14"/>
        <end position="85"/>
    </location>
</feature>
<feature type="repeat" description="Annexin 2" evidence="2">
    <location>
        <begin position="86"/>
        <end position="157"/>
    </location>
</feature>
<feature type="repeat" description="Annexin 3" evidence="2">
    <location>
        <begin position="169"/>
        <end position="241"/>
    </location>
</feature>
<feature type="repeat" description="Annexin 4" evidence="2">
    <location>
        <begin position="245"/>
        <end position="316"/>
    </location>
</feature>
<feature type="lipid moiety-binding region" description="N-myristoyl glycine" evidence="3 5">
    <location>
        <position position="2"/>
    </location>
</feature>
<feature type="splice variant" id="VSP_000291" description="In isoform B." evidence="6">
    <original>H</original>
    <variation>HSQSYTLSEGSQQLPKGDSQPSTVVQPLSHPSRNGEPEAPQP</variation>
    <location>
        <position position="5"/>
    </location>
</feature>
<feature type="sequence variant" id="VAR_055501" description="In dbSNP:rs2294013.">
    <original>R</original>
    <variation>H</variation>
    <location>
        <position position="86"/>
    </location>
</feature>
<feature type="sequence variant" id="VAR_055502" description="In dbSNP:rs6995099.">
    <original>V</original>
    <variation>I</variation>
    <location>
        <position position="108"/>
    </location>
</feature>
<feature type="sequence variant" id="VAR_055503" description="In dbSNP:rs2294015.">
    <original>V</original>
    <variation>I</variation>
    <location>
        <position position="272"/>
    </location>
</feature>
<feature type="mutagenesis site" description="Loss of myristoylation. Loss of location at the cell membrane." evidence="5">
    <original>G</original>
    <variation>A</variation>
    <location>
        <position position="2"/>
    </location>
</feature>
<feature type="mutagenesis site" description="Loss of dimerization. No effect on calcium-dependent membrane binding and location at the cell membrane." evidence="5">
    <original>TNE</original>
    <variation>PGP</variation>
    <location>
        <begin position="32"/>
        <end position="34"/>
    </location>
</feature>
<feature type="mutagenesis site" description="Slightly increased dimerization. Decreases calcium-dependent membrane binding and location at the cell membrane." evidence="5">
    <original>S</original>
    <variation>C</variation>
    <location>
        <position position="73"/>
    </location>
</feature>
<feature type="sequence conflict" description="In Ref. 1; CAA77578." evidence="9" ref="1">
    <original>V</original>
    <variation>F</variation>
    <location>
        <position position="112"/>
    </location>
</feature>
<feature type="helix" evidence="10">
    <location>
        <begin position="16"/>
        <end position="41"/>
    </location>
</feature>
<feature type="helix" evidence="10">
    <location>
        <begin position="46"/>
        <end position="60"/>
    </location>
</feature>
<feature type="helix" evidence="10">
    <location>
        <begin position="64"/>
        <end position="69"/>
    </location>
</feature>
<feature type="helix" evidence="10">
    <location>
        <begin position="74"/>
        <end position="83"/>
    </location>
</feature>
<feature type="helix" evidence="10">
    <location>
        <begin position="87"/>
        <end position="98"/>
    </location>
</feature>
<feature type="strand" evidence="10">
    <location>
        <begin position="102"/>
        <end position="104"/>
    </location>
</feature>
<feature type="helix" evidence="10">
    <location>
        <begin position="107"/>
        <end position="113"/>
    </location>
</feature>
<feature type="helix" evidence="10">
    <location>
        <begin position="118"/>
        <end position="132"/>
    </location>
</feature>
<feature type="helix" evidence="10">
    <location>
        <begin position="136"/>
        <end position="143"/>
    </location>
</feature>
<feature type="helix" evidence="10">
    <location>
        <begin position="146"/>
        <end position="156"/>
    </location>
</feature>
<feature type="helix" evidence="10">
    <location>
        <begin position="168"/>
        <end position="183"/>
    </location>
</feature>
<feature type="helix" evidence="10">
    <location>
        <begin position="190"/>
        <end position="199"/>
    </location>
</feature>
<feature type="helix" evidence="10">
    <location>
        <begin position="202"/>
        <end position="216"/>
    </location>
</feature>
<feature type="helix" evidence="10">
    <location>
        <begin position="220"/>
        <end position="225"/>
    </location>
</feature>
<feature type="helix" evidence="10">
    <location>
        <begin position="230"/>
        <end position="256"/>
    </location>
</feature>
<feature type="strand" evidence="10">
    <location>
        <begin position="259"/>
        <end position="262"/>
    </location>
</feature>
<feature type="helix" evidence="10">
    <location>
        <begin position="265"/>
        <end position="274"/>
    </location>
</feature>
<feature type="turn" evidence="10">
    <location>
        <begin position="275"/>
        <end position="279"/>
    </location>
</feature>
<feature type="helix" evidence="10">
    <location>
        <begin position="280"/>
        <end position="291"/>
    </location>
</feature>
<feature type="helix" evidence="10">
    <location>
        <begin position="295"/>
        <end position="302"/>
    </location>
</feature>
<feature type="helix" evidence="10">
    <location>
        <begin position="306"/>
        <end position="315"/>
    </location>
</feature>
<evidence type="ECO:0000250" key="1">
    <source>
        <dbReference type="UniProtKB" id="Q99JG3"/>
    </source>
</evidence>
<evidence type="ECO:0000255" key="2">
    <source>
        <dbReference type="PROSITE-ProRule" id="PRU01245"/>
    </source>
</evidence>
<evidence type="ECO:0000269" key="3">
    <source>
    </source>
</evidence>
<evidence type="ECO:0000269" key="4">
    <source>
    </source>
</evidence>
<evidence type="ECO:0000269" key="5">
    <source>
    </source>
</evidence>
<evidence type="ECO:0000303" key="6">
    <source>
    </source>
</evidence>
<evidence type="ECO:0000303" key="7">
    <source>
    </source>
</evidence>
<evidence type="ECO:0000303" key="8">
    <source>
    </source>
</evidence>
<evidence type="ECO:0000305" key="9"/>
<evidence type="ECO:0007829" key="10">
    <source>
        <dbReference type="PDB" id="6B3I"/>
    </source>
</evidence>
<accession>P27216</accession>
<accession>Q9BQR5</accession>
<sequence>MGNRHAKASSPQGFDVDRDAKKLNKACKGMGTNEAAIIEILSGRTSDERQQIKQKYKATYGKELEEVLKSELSGNFEKTALALLDRPSEYAARQLQKAMKGLGTDESVLIEVLCTRTNKEIIAIKEAYQRLFDRSLESDVKGDTSGNLKKILVSLLQANRNEGDDVDKDLAGQDAKDLYDAGEGRWGTDELAFNEVLAKRSYKQLRATFQAYQILIGKDIEEAIEEETSGDLQKAYLTLVRCAQDCEDYFAERLYKSMKGAGTDEETLIRIVVTRAEVDLQGIKAKFQEKYQKSLSDMVRSDTSGDFRKLLVALLH</sequence>
<keyword id="KW-0002">3D-structure</keyword>
<keyword id="KW-0025">Alternative splicing</keyword>
<keyword id="KW-0041">Annexin</keyword>
<keyword id="KW-0106">Calcium</keyword>
<keyword id="KW-0111">Calcium/phospholipid-binding</keyword>
<keyword id="KW-1003">Cell membrane</keyword>
<keyword id="KW-0968">Cytoplasmic vesicle</keyword>
<keyword id="KW-0449">Lipoprotein</keyword>
<keyword id="KW-0472">Membrane</keyword>
<keyword id="KW-0519">Myristate</keyword>
<keyword id="KW-1267">Proteomics identification</keyword>
<keyword id="KW-1185">Reference proteome</keyword>
<keyword id="KW-0677">Repeat</keyword>
<dbReference type="EMBL" id="Z11502">
    <property type="protein sequence ID" value="CAA77578.1"/>
    <property type="molecule type" value="mRNA"/>
</dbReference>
<dbReference type="EMBL" id="AJ306450">
    <property type="protein sequence ID" value="CAC34622.1"/>
    <property type="molecule type" value="mRNA"/>
</dbReference>
<dbReference type="EMBL" id="AC135166">
    <property type="status" value="NOT_ANNOTATED_CDS"/>
    <property type="molecule type" value="Genomic_DNA"/>
</dbReference>
<dbReference type="CCDS" id="CCDS34939.1">
    <molecule id="P27216-2"/>
</dbReference>
<dbReference type="CCDS" id="CCDS47917.1">
    <molecule id="P27216-1"/>
</dbReference>
<dbReference type="PIR" id="A41733">
    <property type="entry name" value="LUHUIS"/>
</dbReference>
<dbReference type="RefSeq" id="NP_001003954.1">
    <molecule id="P27216-2"/>
    <property type="nucleotide sequence ID" value="NM_001003954.3"/>
</dbReference>
<dbReference type="RefSeq" id="NP_004297.2">
    <molecule id="P27216-1"/>
    <property type="nucleotide sequence ID" value="NM_004306.4"/>
</dbReference>
<dbReference type="PDB" id="6B3I">
    <property type="method" value="X-ray"/>
    <property type="resolution" value="2.60 A"/>
    <property type="chains" value="A/B/C=1-316"/>
</dbReference>
<dbReference type="PDBsum" id="6B3I"/>
<dbReference type="SMR" id="P27216"/>
<dbReference type="BioGRID" id="106809">
    <property type="interactions" value="19"/>
</dbReference>
<dbReference type="FunCoup" id="P27216">
    <property type="interactions" value="48"/>
</dbReference>
<dbReference type="IntAct" id="P27216">
    <property type="interactions" value="17"/>
</dbReference>
<dbReference type="STRING" id="9606.ENSP00000262219"/>
<dbReference type="GlyGen" id="P27216">
    <property type="glycosylation" value="1 site, 1 O-linked glycan (1 site)"/>
</dbReference>
<dbReference type="iPTMnet" id="P27216"/>
<dbReference type="PhosphoSitePlus" id="P27216"/>
<dbReference type="BioMuta" id="ANXA13"/>
<dbReference type="DMDM" id="281185504"/>
<dbReference type="jPOST" id="P27216"/>
<dbReference type="MassIVE" id="P27216"/>
<dbReference type="PaxDb" id="9606-ENSP00000262219"/>
<dbReference type="PeptideAtlas" id="P27216"/>
<dbReference type="ProteomicsDB" id="54377">
    <molecule id="P27216-1"/>
</dbReference>
<dbReference type="ProteomicsDB" id="54378">
    <molecule id="P27216-2"/>
</dbReference>
<dbReference type="Antibodypedia" id="13866">
    <property type="antibodies" value="218 antibodies from 29 providers"/>
</dbReference>
<dbReference type="DNASU" id="312"/>
<dbReference type="Ensembl" id="ENST00000262219.10">
    <molecule id="P27216-2"/>
    <property type="protein sequence ID" value="ENSP00000262219.6"/>
    <property type="gene ID" value="ENSG00000104537.17"/>
</dbReference>
<dbReference type="Ensembl" id="ENST00000419625.6">
    <molecule id="P27216-1"/>
    <property type="protein sequence ID" value="ENSP00000390809.1"/>
    <property type="gene ID" value="ENSG00000104537.17"/>
</dbReference>
<dbReference type="GeneID" id="312"/>
<dbReference type="KEGG" id="hsa:312"/>
<dbReference type="MANE-Select" id="ENST00000419625.6">
    <property type="protein sequence ID" value="ENSP00000390809.1"/>
    <property type="RefSeq nucleotide sequence ID" value="NM_004306.4"/>
    <property type="RefSeq protein sequence ID" value="NP_004297.2"/>
</dbReference>
<dbReference type="UCSC" id="uc003yqt.4">
    <molecule id="P27216-1"/>
    <property type="organism name" value="human"/>
</dbReference>
<dbReference type="AGR" id="HGNC:536"/>
<dbReference type="CTD" id="312"/>
<dbReference type="DisGeNET" id="312"/>
<dbReference type="GeneCards" id="ANXA13"/>
<dbReference type="HGNC" id="HGNC:536">
    <property type="gene designation" value="ANXA13"/>
</dbReference>
<dbReference type="HPA" id="ENSG00000104537">
    <property type="expression patterns" value="Tissue enhanced (gallbladder, intestine)"/>
</dbReference>
<dbReference type="MIM" id="602573">
    <property type="type" value="gene"/>
</dbReference>
<dbReference type="neXtProt" id="NX_P27216"/>
<dbReference type="OpenTargets" id="ENSG00000104537"/>
<dbReference type="PharmGKB" id="PA24826"/>
<dbReference type="VEuPathDB" id="HostDB:ENSG00000104537"/>
<dbReference type="eggNOG" id="KOG0819">
    <property type="taxonomic scope" value="Eukaryota"/>
</dbReference>
<dbReference type="GeneTree" id="ENSGT00940000159797"/>
<dbReference type="HOGENOM" id="CLU_025300_0_2_1"/>
<dbReference type="InParanoid" id="P27216"/>
<dbReference type="OMA" id="LLIGKDM"/>
<dbReference type="OrthoDB" id="37886at2759"/>
<dbReference type="PAN-GO" id="P27216">
    <property type="GO annotations" value="2 GO annotations based on evolutionary models"/>
</dbReference>
<dbReference type="PhylomeDB" id="P27216"/>
<dbReference type="TreeFam" id="TF105452"/>
<dbReference type="PathwayCommons" id="P27216"/>
<dbReference type="SignaLink" id="P27216"/>
<dbReference type="SIGNOR" id="P27216"/>
<dbReference type="BioGRID-ORCS" id="312">
    <property type="hits" value="15 hits in 1152 CRISPR screens"/>
</dbReference>
<dbReference type="GeneWiki" id="ANXA13"/>
<dbReference type="GenomeRNAi" id="312"/>
<dbReference type="Pharos" id="P27216">
    <property type="development level" value="Tbio"/>
</dbReference>
<dbReference type="PRO" id="PR:P27216"/>
<dbReference type="Proteomes" id="UP000005640">
    <property type="component" value="Chromosome 8"/>
</dbReference>
<dbReference type="RNAct" id="P27216">
    <property type="molecule type" value="protein"/>
</dbReference>
<dbReference type="Bgee" id="ENSG00000104537">
    <property type="expression patterns" value="Expressed in gall bladder and 102 other cell types or tissues"/>
</dbReference>
<dbReference type="ExpressionAtlas" id="P27216">
    <property type="expression patterns" value="baseline and differential"/>
</dbReference>
<dbReference type="GO" id="GO:0016324">
    <property type="term" value="C:apical plasma membrane"/>
    <property type="evidence" value="ECO:0000250"/>
    <property type="project" value="CAFA"/>
</dbReference>
<dbReference type="GO" id="GO:0016323">
    <property type="term" value="C:basolateral plasma membrane"/>
    <property type="evidence" value="ECO:0000250"/>
    <property type="project" value="CAFA"/>
</dbReference>
<dbReference type="GO" id="GO:0005737">
    <property type="term" value="C:cytoplasm"/>
    <property type="evidence" value="ECO:0000318"/>
    <property type="project" value="GO_Central"/>
</dbReference>
<dbReference type="GO" id="GO:0031410">
    <property type="term" value="C:cytoplasmic vesicle"/>
    <property type="evidence" value="ECO:0007669"/>
    <property type="project" value="UniProtKB-KW"/>
</dbReference>
<dbReference type="GO" id="GO:0070382">
    <property type="term" value="C:exocytic vesicle"/>
    <property type="evidence" value="ECO:0000250"/>
    <property type="project" value="CAFA"/>
</dbReference>
<dbReference type="GO" id="GO:0070062">
    <property type="term" value="C:extracellular exosome"/>
    <property type="evidence" value="ECO:0007005"/>
    <property type="project" value="UniProtKB"/>
</dbReference>
<dbReference type="GO" id="GO:0005615">
    <property type="term" value="C:extracellular space"/>
    <property type="evidence" value="ECO:0007005"/>
    <property type="project" value="UniProtKB"/>
</dbReference>
<dbReference type="GO" id="GO:0016020">
    <property type="term" value="C:membrane"/>
    <property type="evidence" value="ECO:0000314"/>
    <property type="project" value="UniProtKB"/>
</dbReference>
<dbReference type="GO" id="GO:0045121">
    <property type="term" value="C:membrane raft"/>
    <property type="evidence" value="ECO:0000250"/>
    <property type="project" value="CAFA"/>
</dbReference>
<dbReference type="GO" id="GO:0005654">
    <property type="term" value="C:nucleoplasm"/>
    <property type="evidence" value="ECO:0000314"/>
    <property type="project" value="HPA"/>
</dbReference>
<dbReference type="GO" id="GO:0005634">
    <property type="term" value="C:nucleus"/>
    <property type="evidence" value="ECO:0000318"/>
    <property type="project" value="GO_Central"/>
</dbReference>
<dbReference type="GO" id="GO:0005886">
    <property type="term" value="C:plasma membrane"/>
    <property type="evidence" value="ECO:0000314"/>
    <property type="project" value="HPA"/>
</dbReference>
<dbReference type="GO" id="GO:0012506">
    <property type="term" value="C:vesicle membrane"/>
    <property type="evidence" value="ECO:0000318"/>
    <property type="project" value="GO_Central"/>
</dbReference>
<dbReference type="GO" id="GO:0005509">
    <property type="term" value="F:calcium ion binding"/>
    <property type="evidence" value="ECO:0000314"/>
    <property type="project" value="UniProtKB"/>
</dbReference>
<dbReference type="GO" id="GO:0005544">
    <property type="term" value="F:calcium-dependent phospholipid binding"/>
    <property type="evidence" value="ECO:0000314"/>
    <property type="project" value="UniProtKB"/>
</dbReference>
<dbReference type="GO" id="GO:1901611">
    <property type="term" value="F:phosphatidylglycerol binding"/>
    <property type="evidence" value="ECO:0000314"/>
    <property type="project" value="UniProtKB"/>
</dbReference>
<dbReference type="GO" id="GO:0001786">
    <property type="term" value="F:phosphatidylserine binding"/>
    <property type="evidence" value="ECO:0000314"/>
    <property type="project" value="UniProtKB"/>
</dbReference>
<dbReference type="GO" id="GO:0030154">
    <property type="term" value="P:cell differentiation"/>
    <property type="evidence" value="ECO:0000303"/>
    <property type="project" value="UniProtKB"/>
</dbReference>
<dbReference type="GO" id="GO:0042997">
    <property type="term" value="P:negative regulation of Golgi to plasma membrane protein transport"/>
    <property type="evidence" value="ECO:0000250"/>
    <property type="project" value="CAFA"/>
</dbReference>
<dbReference type="GO" id="GO:0042998">
    <property type="term" value="P:positive regulation of Golgi to plasma membrane protein transport"/>
    <property type="evidence" value="ECO:0000250"/>
    <property type="project" value="CAFA"/>
</dbReference>
<dbReference type="FunFam" id="1.10.220.10:FF:000001">
    <property type="entry name" value="Annexin"/>
    <property type="match status" value="1"/>
</dbReference>
<dbReference type="FunFam" id="1.10.220.10:FF:000002">
    <property type="entry name" value="Annexin"/>
    <property type="match status" value="1"/>
</dbReference>
<dbReference type="FunFam" id="1.10.220.10:FF:000003">
    <property type="entry name" value="Annexin"/>
    <property type="match status" value="1"/>
</dbReference>
<dbReference type="FunFam" id="1.10.220.10:FF:000011">
    <property type="entry name" value="Annexin"/>
    <property type="match status" value="1"/>
</dbReference>
<dbReference type="Gene3D" id="1.10.220.10">
    <property type="entry name" value="Annexin"/>
    <property type="match status" value="4"/>
</dbReference>
<dbReference type="InterPro" id="IPR001464">
    <property type="entry name" value="Annexin"/>
</dbReference>
<dbReference type="InterPro" id="IPR018502">
    <property type="entry name" value="Annexin_repeat"/>
</dbReference>
<dbReference type="InterPro" id="IPR018252">
    <property type="entry name" value="Annexin_repeat_CS"/>
</dbReference>
<dbReference type="InterPro" id="IPR037104">
    <property type="entry name" value="Annexin_sf"/>
</dbReference>
<dbReference type="InterPro" id="IPR009166">
    <property type="entry name" value="ANX13"/>
</dbReference>
<dbReference type="PANTHER" id="PTHR10502">
    <property type="entry name" value="ANNEXIN"/>
    <property type="match status" value="1"/>
</dbReference>
<dbReference type="PANTHER" id="PTHR10502:SF175">
    <property type="entry name" value="ANNEXIN A13"/>
    <property type="match status" value="1"/>
</dbReference>
<dbReference type="Pfam" id="PF00191">
    <property type="entry name" value="Annexin"/>
    <property type="match status" value="4"/>
</dbReference>
<dbReference type="PRINTS" id="PR00196">
    <property type="entry name" value="ANNEXIN"/>
</dbReference>
<dbReference type="PRINTS" id="PR01811">
    <property type="entry name" value="ANNEXINXIII"/>
</dbReference>
<dbReference type="SMART" id="SM00335">
    <property type="entry name" value="ANX"/>
    <property type="match status" value="4"/>
</dbReference>
<dbReference type="SUPFAM" id="SSF47874">
    <property type="entry name" value="Annexin"/>
    <property type="match status" value="1"/>
</dbReference>
<dbReference type="PROSITE" id="PS00223">
    <property type="entry name" value="ANNEXIN_1"/>
    <property type="match status" value="3"/>
</dbReference>
<dbReference type="PROSITE" id="PS51897">
    <property type="entry name" value="ANNEXIN_2"/>
    <property type="match status" value="4"/>
</dbReference>
<name>ANX13_HUMAN</name>
<gene>
    <name type="primary">ANXA13</name>
    <name type="synonym">ANX13</name>
</gene>
<protein>
    <recommendedName>
        <fullName>Annexin A13</fullName>
    </recommendedName>
    <alternativeName>
        <fullName>Annexin XIII</fullName>
    </alternativeName>
    <alternativeName>
        <fullName>Annexin-13</fullName>
    </alternativeName>
    <alternativeName>
        <fullName evidence="7">Intestine-specific annexin</fullName>
        <shortName evidence="7">ISA</shortName>
    </alternativeName>
</protein>
<organism>
    <name type="scientific">Homo sapiens</name>
    <name type="common">Human</name>
    <dbReference type="NCBI Taxonomy" id="9606"/>
    <lineage>
        <taxon>Eukaryota</taxon>
        <taxon>Metazoa</taxon>
        <taxon>Chordata</taxon>
        <taxon>Craniata</taxon>
        <taxon>Vertebrata</taxon>
        <taxon>Euteleostomi</taxon>
        <taxon>Mammalia</taxon>
        <taxon>Eutheria</taxon>
        <taxon>Euarchontoglires</taxon>
        <taxon>Primates</taxon>
        <taxon>Haplorrhini</taxon>
        <taxon>Catarrhini</taxon>
        <taxon>Hominidae</taxon>
        <taxon>Homo</taxon>
    </lineage>
</organism>